<reference key="1">
    <citation type="journal article" date="1988" name="J. Bacteriol.">
        <title>Structure and comparative analysis of the genes encoding component C of methyl coenzyme M reductase in the extremely thermophilic archaebacterium Methanothermus fervidus.</title>
        <authorList>
            <person name="Weil C.F."/>
            <person name="Cram D.S."/>
            <person name="Sherf B.A."/>
            <person name="Reeve J.N."/>
        </authorList>
    </citation>
    <scope>NUCLEOTIDE SEQUENCE [GENOMIC DNA]</scope>
</reference>
<sequence>MDPAVASLGILALTTASAIIGQTIEDVETNIGSQSNPNSQVQLAPQMGNLHRFFNKAIAGEPFAYCTFCGVSGAITVATLYLHLPAVIALAIGAAITTLIWLAYSTTAYLGRVSGSATFNQPVFLDMLTENLGPIAGHAFIVFFCMTGVAYLMTLPVKGFAHPFPIPVIGMIWGMTIGAIGSAVGDVYYGAEAEFVHKKFGGGIPVASHGDITRKGVLGARSPMEVGNFTVKYGSPITGMAFGLIVLSITRGVYNIE</sequence>
<protein>
    <recommendedName>
        <fullName>Tetrahydromethanopterin S-methyltransferase subunit E</fullName>
        <ecNumber>7.2.1.4</ecNumber>
    </recommendedName>
    <alternativeName>
        <fullName>N5-methyltetrahydromethanopterin--coenzyme M methyltransferase subunit E</fullName>
    </alternativeName>
</protein>
<accession>Q49176</accession>
<evidence type="ECO:0000250" key="1"/>
<evidence type="ECO:0000255" key="2"/>
<evidence type="ECO:0000305" key="3"/>
<gene>
    <name type="primary">mtrE</name>
</gene>
<feature type="chain" id="PRO_0000147538" description="Tetrahydromethanopterin S-methyltransferase subunit E">
    <location>
        <begin position="1"/>
        <end position="257"/>
    </location>
</feature>
<feature type="transmembrane region" description="Helical" evidence="2">
    <location>
        <begin position="4"/>
        <end position="24"/>
    </location>
</feature>
<feature type="transmembrane region" description="Helical" evidence="2">
    <location>
        <begin position="62"/>
        <end position="82"/>
    </location>
</feature>
<feature type="transmembrane region" description="Helical" evidence="2">
    <location>
        <begin position="84"/>
        <end position="104"/>
    </location>
</feature>
<feature type="transmembrane region" description="Helical" evidence="2">
    <location>
        <begin position="132"/>
        <end position="152"/>
    </location>
</feature>
<feature type="transmembrane region" description="Helical" evidence="2">
    <location>
        <begin position="164"/>
        <end position="184"/>
    </location>
</feature>
<feature type="transmembrane region" description="Helical" evidence="2">
    <location>
        <begin position="229"/>
        <end position="249"/>
    </location>
</feature>
<dbReference type="EC" id="7.2.1.4"/>
<dbReference type="EMBL" id="J03375">
    <property type="protein sequence ID" value="AAA72198.1"/>
    <property type="molecule type" value="Genomic_DNA"/>
</dbReference>
<dbReference type="SMR" id="Q49176"/>
<dbReference type="UniPathway" id="UPA00640">
    <property type="reaction ID" value="UER00698"/>
</dbReference>
<dbReference type="GO" id="GO:0005737">
    <property type="term" value="C:cytoplasm"/>
    <property type="evidence" value="ECO:0007669"/>
    <property type="project" value="InterPro"/>
</dbReference>
<dbReference type="GO" id="GO:0005886">
    <property type="term" value="C:plasma membrane"/>
    <property type="evidence" value="ECO:0007669"/>
    <property type="project" value="UniProtKB-SubCell"/>
</dbReference>
<dbReference type="GO" id="GO:0012506">
    <property type="term" value="C:vesicle membrane"/>
    <property type="evidence" value="ECO:0007669"/>
    <property type="project" value="InterPro"/>
</dbReference>
<dbReference type="GO" id="GO:0030269">
    <property type="term" value="F:tetrahydromethanopterin S-methyltransferase activity"/>
    <property type="evidence" value="ECO:0007669"/>
    <property type="project" value="UniProtKB-UniRule"/>
</dbReference>
<dbReference type="GO" id="GO:0019386">
    <property type="term" value="P:methanogenesis, from carbon dioxide"/>
    <property type="evidence" value="ECO:0007669"/>
    <property type="project" value="UniProtKB-UniRule"/>
</dbReference>
<dbReference type="GO" id="GO:0032259">
    <property type="term" value="P:methylation"/>
    <property type="evidence" value="ECO:0007669"/>
    <property type="project" value="UniProtKB-KW"/>
</dbReference>
<dbReference type="GO" id="GO:0006730">
    <property type="term" value="P:one-carbon metabolic process"/>
    <property type="evidence" value="ECO:0007669"/>
    <property type="project" value="UniProtKB-UniRule"/>
</dbReference>
<dbReference type="HAMAP" id="MF_01098">
    <property type="entry name" value="MtrE"/>
    <property type="match status" value="1"/>
</dbReference>
<dbReference type="InterPro" id="IPR005780">
    <property type="entry name" value="MeTrfase_E"/>
</dbReference>
<dbReference type="NCBIfam" id="TIGR01113">
    <property type="entry name" value="mtrE"/>
    <property type="match status" value="1"/>
</dbReference>
<dbReference type="Pfam" id="PF04206">
    <property type="entry name" value="MtrE"/>
    <property type="match status" value="1"/>
</dbReference>
<dbReference type="PIRSF" id="PIRSF016509">
    <property type="entry name" value="MtrE"/>
    <property type="match status" value="1"/>
</dbReference>
<proteinExistence type="inferred from homology"/>
<comment type="function">
    <text evidence="1">Part of a complex that catalyzes the formation of methyl-coenzyme M and tetrahydromethanopterin from coenzyme M and methyl-tetrahydromethanopterin. This is an energy-conserving, sodium-ion translocating step.</text>
</comment>
<comment type="catalytic activity">
    <reaction>
        <text>5-methyl-5,6,7,8-tetrahydromethanopterin + coenzyme M + 2 Na(+)(in) = 5,6,7,8-tetrahydromethanopterin + methyl-coenzyme M + 2 Na(+)(out)</text>
        <dbReference type="Rhea" id="RHEA:53492"/>
        <dbReference type="ChEBI" id="CHEBI:29101"/>
        <dbReference type="ChEBI" id="CHEBI:58103"/>
        <dbReference type="ChEBI" id="CHEBI:58116"/>
        <dbReference type="ChEBI" id="CHEBI:58286"/>
        <dbReference type="ChEBI" id="CHEBI:58319"/>
        <dbReference type="EC" id="7.2.1.4"/>
    </reaction>
</comment>
<comment type="pathway">
    <text>One-carbon metabolism; methanogenesis from CO(2); methyl-coenzyme M from 5,10-methylene-5,6,7,8-tetrahydromethanopterin: step 2/2.</text>
</comment>
<comment type="subunit">
    <text evidence="1">The complex is composed of 8 subunits; MtrA, MtrB, MtrC, MtrD, MtrE, MtrF, MtrG and MtrH.</text>
</comment>
<comment type="subcellular location">
    <subcellularLocation>
        <location evidence="3">Cell membrane</location>
        <topology evidence="3">Multi-pass membrane protein</topology>
    </subcellularLocation>
</comment>
<comment type="similarity">
    <text evidence="3">Belongs to the MtrE family.</text>
</comment>
<keyword id="KW-1003">Cell membrane</keyword>
<keyword id="KW-0472">Membrane</keyword>
<keyword id="KW-0484">Methanogenesis</keyword>
<keyword id="KW-0489">Methyltransferase</keyword>
<keyword id="KW-0554">One-carbon metabolism</keyword>
<keyword id="KW-0808">Transferase</keyword>
<keyword id="KW-1278">Translocase</keyword>
<keyword id="KW-0812">Transmembrane</keyword>
<keyword id="KW-1133">Transmembrane helix</keyword>
<organism>
    <name type="scientific">Methanothermus fervidus</name>
    <dbReference type="NCBI Taxonomy" id="2180"/>
    <lineage>
        <taxon>Archaea</taxon>
        <taxon>Methanobacteriati</taxon>
        <taxon>Methanobacteriota</taxon>
        <taxon>Methanomada group</taxon>
        <taxon>Methanobacteria</taxon>
        <taxon>Methanobacteriales</taxon>
        <taxon>Methanothermaceae</taxon>
        <taxon>Methanothermus</taxon>
    </lineage>
</organism>
<name>MTRE_METFE</name>